<feature type="chain" id="PRO_0000319632" description="UPF0519 protein C">
    <location>
        <begin position="1"/>
        <end position="67"/>
    </location>
</feature>
<feature type="region of interest" description="Disordered" evidence="1">
    <location>
        <begin position="18"/>
        <end position="37"/>
    </location>
</feature>
<feature type="compositionally biased region" description="Low complexity" evidence="1">
    <location>
        <begin position="22"/>
        <end position="33"/>
    </location>
</feature>
<gene>
    <name type="ORF">DDB_G0292598</name>
</gene>
<comment type="similarity">
    <text evidence="2">Belongs to the UPF0519 family.</text>
</comment>
<organism>
    <name type="scientific">Dictyostelium discoideum</name>
    <name type="common">Social amoeba</name>
    <dbReference type="NCBI Taxonomy" id="44689"/>
    <lineage>
        <taxon>Eukaryota</taxon>
        <taxon>Amoebozoa</taxon>
        <taxon>Evosea</taxon>
        <taxon>Eumycetozoa</taxon>
        <taxon>Dictyostelia</taxon>
        <taxon>Dictyosteliales</taxon>
        <taxon>Dictyosteliaceae</taxon>
        <taxon>Dictyostelium</taxon>
    </lineage>
</organism>
<dbReference type="EMBL" id="AAFI02000194">
    <property type="protein sequence ID" value="EAL61102.2"/>
    <property type="molecule type" value="Genomic_DNA"/>
</dbReference>
<dbReference type="RefSeq" id="XP_629515.2">
    <property type="nucleotide sequence ID" value="XM_629513.2"/>
</dbReference>
<dbReference type="PaxDb" id="44689-DDB0266537"/>
<dbReference type="EnsemblProtists" id="EAL61102">
    <property type="protein sequence ID" value="EAL61102"/>
    <property type="gene ID" value="DDB_G0292598"/>
</dbReference>
<dbReference type="GeneID" id="8628766"/>
<dbReference type="KEGG" id="ddi:DDB_G0292598"/>
<dbReference type="dictyBase" id="DDB_G0292598"/>
<dbReference type="VEuPathDB" id="AmoebaDB:DDB_G0292598"/>
<dbReference type="HOGENOM" id="CLU_2799314_0_0_1"/>
<dbReference type="InParanoid" id="Q54D05"/>
<dbReference type="PhylomeDB" id="Q54D05"/>
<dbReference type="PRO" id="PR:Q54D05"/>
<dbReference type="Proteomes" id="UP000002195">
    <property type="component" value="Chromosome 6"/>
</dbReference>
<dbReference type="InterPro" id="IPR008455">
    <property type="entry name" value="HssA/B-related"/>
</dbReference>
<dbReference type="Pfam" id="PF05710">
    <property type="entry name" value="Coiled"/>
    <property type="match status" value="1"/>
</dbReference>
<sequence length="67" mass="6929">MTIINSISSLGKISNKNKSQANLNSNSTNSPNNVQGLNQNTGLVSSLLELVRGVTFALGLAVESVGL</sequence>
<evidence type="ECO:0000256" key="1">
    <source>
        <dbReference type="SAM" id="MobiDB-lite"/>
    </source>
</evidence>
<evidence type="ECO:0000305" key="2"/>
<name>U519C_DICDI</name>
<reference key="1">
    <citation type="journal article" date="2005" name="Nature">
        <title>The genome of the social amoeba Dictyostelium discoideum.</title>
        <authorList>
            <person name="Eichinger L."/>
            <person name="Pachebat J.A."/>
            <person name="Gloeckner G."/>
            <person name="Rajandream M.A."/>
            <person name="Sucgang R."/>
            <person name="Berriman M."/>
            <person name="Song J."/>
            <person name="Olsen R."/>
            <person name="Szafranski K."/>
            <person name="Xu Q."/>
            <person name="Tunggal B."/>
            <person name="Kummerfeld S."/>
            <person name="Madera M."/>
            <person name="Konfortov B.A."/>
            <person name="Rivero F."/>
            <person name="Bankier A.T."/>
            <person name="Lehmann R."/>
            <person name="Hamlin N."/>
            <person name="Davies R."/>
            <person name="Gaudet P."/>
            <person name="Fey P."/>
            <person name="Pilcher K."/>
            <person name="Chen G."/>
            <person name="Saunders D."/>
            <person name="Sodergren E.J."/>
            <person name="Davis P."/>
            <person name="Kerhornou A."/>
            <person name="Nie X."/>
            <person name="Hall N."/>
            <person name="Anjard C."/>
            <person name="Hemphill L."/>
            <person name="Bason N."/>
            <person name="Farbrother P."/>
            <person name="Desany B."/>
            <person name="Just E."/>
            <person name="Morio T."/>
            <person name="Rost R."/>
            <person name="Churcher C.M."/>
            <person name="Cooper J."/>
            <person name="Haydock S."/>
            <person name="van Driessche N."/>
            <person name="Cronin A."/>
            <person name="Goodhead I."/>
            <person name="Muzny D.M."/>
            <person name="Mourier T."/>
            <person name="Pain A."/>
            <person name="Lu M."/>
            <person name="Harper D."/>
            <person name="Lindsay R."/>
            <person name="Hauser H."/>
            <person name="James K.D."/>
            <person name="Quiles M."/>
            <person name="Madan Babu M."/>
            <person name="Saito T."/>
            <person name="Buchrieser C."/>
            <person name="Wardroper A."/>
            <person name="Felder M."/>
            <person name="Thangavelu M."/>
            <person name="Johnson D."/>
            <person name="Knights A."/>
            <person name="Loulseged H."/>
            <person name="Mungall K.L."/>
            <person name="Oliver K."/>
            <person name="Price C."/>
            <person name="Quail M.A."/>
            <person name="Urushihara H."/>
            <person name="Hernandez J."/>
            <person name="Rabbinowitsch E."/>
            <person name="Steffen D."/>
            <person name="Sanders M."/>
            <person name="Ma J."/>
            <person name="Kohara Y."/>
            <person name="Sharp S."/>
            <person name="Simmonds M.N."/>
            <person name="Spiegler S."/>
            <person name="Tivey A."/>
            <person name="Sugano S."/>
            <person name="White B."/>
            <person name="Walker D."/>
            <person name="Woodward J.R."/>
            <person name="Winckler T."/>
            <person name="Tanaka Y."/>
            <person name="Shaulsky G."/>
            <person name="Schleicher M."/>
            <person name="Weinstock G.M."/>
            <person name="Rosenthal A."/>
            <person name="Cox E.C."/>
            <person name="Chisholm R.L."/>
            <person name="Gibbs R.A."/>
            <person name="Loomis W.F."/>
            <person name="Platzer M."/>
            <person name="Kay R.R."/>
            <person name="Williams J.G."/>
            <person name="Dear P.H."/>
            <person name="Noegel A.A."/>
            <person name="Barrell B.G."/>
            <person name="Kuspa A."/>
        </authorList>
    </citation>
    <scope>NUCLEOTIDE SEQUENCE [LARGE SCALE GENOMIC DNA]</scope>
    <source>
        <strain>AX4</strain>
    </source>
</reference>
<keyword id="KW-1185">Reference proteome</keyword>
<protein>
    <recommendedName>
        <fullName>UPF0519 protein C</fullName>
    </recommendedName>
</protein>
<proteinExistence type="inferred from homology"/>
<accession>Q54D05</accession>